<accession>Q4P426</accession>
<accession>A0A0D1C9S8</accession>
<protein>
    <recommendedName>
        <fullName evidence="1">Small ribosomal subunit protein uS2</fullName>
    </recommendedName>
    <alternativeName>
        <fullName evidence="3">40S ribosomal protein S0</fullName>
    </alternativeName>
</protein>
<feature type="chain" id="PRO_0000371650" description="Small ribosomal subunit protein uS2">
    <location>
        <begin position="1"/>
        <end position="276"/>
    </location>
</feature>
<feature type="region of interest" description="Disordered" evidence="2">
    <location>
        <begin position="209"/>
        <end position="233"/>
    </location>
</feature>
<feature type="region of interest" description="Disordered" evidence="2">
    <location>
        <begin position="252"/>
        <end position="276"/>
    </location>
</feature>
<feature type="compositionally biased region" description="Low complexity" evidence="2">
    <location>
        <begin position="211"/>
        <end position="231"/>
    </location>
</feature>
<comment type="function">
    <text evidence="1">Required for the assembly and/or stability of the 40S ribosomal subunit. Required for the processing of the 20S rRNA-precursor to mature 18S rRNA in a late step of the maturation of 40S ribosomal subunits.</text>
</comment>
<comment type="subunit">
    <text evidence="1">Component of the small ribosomal subunit. Mature ribosomes consist of a small (40S) and a large (60S) subunit. The 40S subunit contains about 33 different proteins and 1 molecule of RNA (18S). The 60S subunit contains about 49 different proteins and 3 molecules of RNA (25S, 5.8S and 5S). Interacts with RPS21.</text>
</comment>
<comment type="subcellular location">
    <subcellularLocation>
        <location evidence="1">Cytoplasm</location>
    </subcellularLocation>
</comment>
<comment type="similarity">
    <text evidence="1">Belongs to the universal ribosomal protein uS2 family.</text>
</comment>
<organism>
    <name type="scientific">Mycosarcoma maydis</name>
    <name type="common">Corn smut fungus</name>
    <name type="synonym">Ustilago maydis</name>
    <dbReference type="NCBI Taxonomy" id="5270"/>
    <lineage>
        <taxon>Eukaryota</taxon>
        <taxon>Fungi</taxon>
        <taxon>Dikarya</taxon>
        <taxon>Basidiomycota</taxon>
        <taxon>Ustilaginomycotina</taxon>
        <taxon>Ustilaginomycetes</taxon>
        <taxon>Ustilaginales</taxon>
        <taxon>Ustilaginaceae</taxon>
        <taxon>Mycosarcoma</taxon>
    </lineage>
</organism>
<evidence type="ECO:0000255" key="1">
    <source>
        <dbReference type="HAMAP-Rule" id="MF_03015"/>
    </source>
</evidence>
<evidence type="ECO:0000256" key="2">
    <source>
        <dbReference type="SAM" id="MobiDB-lite"/>
    </source>
</evidence>
<evidence type="ECO:0000305" key="3"/>
<reference key="1">
    <citation type="journal article" date="2006" name="Nature">
        <title>Insights from the genome of the biotrophic fungal plant pathogen Ustilago maydis.</title>
        <authorList>
            <person name="Kaemper J."/>
            <person name="Kahmann R."/>
            <person name="Boelker M."/>
            <person name="Ma L.-J."/>
            <person name="Brefort T."/>
            <person name="Saville B.J."/>
            <person name="Banuett F."/>
            <person name="Kronstad J.W."/>
            <person name="Gold S.E."/>
            <person name="Mueller O."/>
            <person name="Perlin M.H."/>
            <person name="Woesten H.A.B."/>
            <person name="de Vries R."/>
            <person name="Ruiz-Herrera J."/>
            <person name="Reynaga-Pena C.G."/>
            <person name="Snetselaar K."/>
            <person name="McCann M."/>
            <person name="Perez-Martin J."/>
            <person name="Feldbruegge M."/>
            <person name="Basse C.W."/>
            <person name="Steinberg G."/>
            <person name="Ibeas J.I."/>
            <person name="Holloman W."/>
            <person name="Guzman P."/>
            <person name="Farman M.L."/>
            <person name="Stajich J.E."/>
            <person name="Sentandreu R."/>
            <person name="Gonzalez-Prieto J.M."/>
            <person name="Kennell J.C."/>
            <person name="Molina L."/>
            <person name="Schirawski J."/>
            <person name="Mendoza-Mendoza A."/>
            <person name="Greilinger D."/>
            <person name="Muench K."/>
            <person name="Roessel N."/>
            <person name="Scherer M."/>
            <person name="Vranes M."/>
            <person name="Ladendorf O."/>
            <person name="Vincon V."/>
            <person name="Fuchs U."/>
            <person name="Sandrock B."/>
            <person name="Meng S."/>
            <person name="Ho E.C.H."/>
            <person name="Cahill M.J."/>
            <person name="Boyce K.J."/>
            <person name="Klose J."/>
            <person name="Klosterman S.J."/>
            <person name="Deelstra H.J."/>
            <person name="Ortiz-Castellanos L."/>
            <person name="Li W."/>
            <person name="Sanchez-Alonso P."/>
            <person name="Schreier P.H."/>
            <person name="Haeuser-Hahn I."/>
            <person name="Vaupel M."/>
            <person name="Koopmann E."/>
            <person name="Friedrich G."/>
            <person name="Voss H."/>
            <person name="Schlueter T."/>
            <person name="Margolis J."/>
            <person name="Platt D."/>
            <person name="Swimmer C."/>
            <person name="Gnirke A."/>
            <person name="Chen F."/>
            <person name="Vysotskaia V."/>
            <person name="Mannhaupt G."/>
            <person name="Gueldener U."/>
            <person name="Muensterkoetter M."/>
            <person name="Haase D."/>
            <person name="Oesterheld M."/>
            <person name="Mewes H.-W."/>
            <person name="Mauceli E.W."/>
            <person name="DeCaprio D."/>
            <person name="Wade C.M."/>
            <person name="Butler J."/>
            <person name="Young S.K."/>
            <person name="Jaffe D.B."/>
            <person name="Calvo S.E."/>
            <person name="Nusbaum C."/>
            <person name="Galagan J.E."/>
            <person name="Birren B.W."/>
        </authorList>
    </citation>
    <scope>NUCLEOTIDE SEQUENCE [LARGE SCALE GENOMIC DNA]</scope>
    <source>
        <strain>DSM 14603 / FGSC 9021 / UM521</strain>
    </source>
</reference>
<reference key="2">
    <citation type="submission" date="2014-09" db="EMBL/GenBank/DDBJ databases">
        <authorList>
            <person name="Gueldener U."/>
            <person name="Muensterkoetter M."/>
            <person name="Walter M.C."/>
            <person name="Mannhaupt G."/>
            <person name="Kahmann R."/>
        </authorList>
    </citation>
    <scope>GENOME REANNOTATION</scope>
    <source>
        <strain>DSM 14603 / FGSC 9021 / UM521</strain>
    </source>
</reference>
<sequence length="276" mass="29894">MSKVPAALNPTEEDISLLLAAQTHIGTKNADKQMAPYIYKRRADGIHLLNIGKTWEKIVFAARILAAIENPADICVISGRQYGHRAVLKFAAQTGATAIAGRFTPGSFTNYITRSFKEPRVIVVTDPRVDHQAIREASYVNIPCISFVDSDSPLKFVDVAIPGNVRGRHSVGLLWWLLCRTVLRIKGGDLSVMPDMFFYRDPEEVEREAQEAAAAAQAAKETAEPTTEGAADVQADVPLAVAANLATETGNVDWSAEGAQDWAADGAAEQATSSWE</sequence>
<dbReference type="EMBL" id="CM003143">
    <property type="protein sequence ID" value="KIS70062.1"/>
    <property type="molecule type" value="Genomic_DNA"/>
</dbReference>
<dbReference type="RefSeq" id="XP_011388199.1">
    <property type="nucleotide sequence ID" value="XM_011389897.1"/>
</dbReference>
<dbReference type="SMR" id="Q4P426"/>
<dbReference type="FunCoup" id="Q4P426">
    <property type="interactions" value="338"/>
</dbReference>
<dbReference type="STRING" id="237631.Q4P426"/>
<dbReference type="EnsemblFungi" id="KIS70062">
    <property type="protein sequence ID" value="KIS70062"/>
    <property type="gene ID" value="UMAG_05137"/>
</dbReference>
<dbReference type="GeneID" id="23565109"/>
<dbReference type="KEGG" id="uma:UMAG_05137"/>
<dbReference type="VEuPathDB" id="FungiDB:UMAG_05137"/>
<dbReference type="eggNOG" id="KOG0830">
    <property type="taxonomic scope" value="Eukaryota"/>
</dbReference>
<dbReference type="HOGENOM" id="CLU_058171_2_0_1"/>
<dbReference type="InParanoid" id="Q4P426"/>
<dbReference type="OMA" id="VKNFFEP"/>
<dbReference type="OrthoDB" id="414863at2759"/>
<dbReference type="Proteomes" id="UP000000561">
    <property type="component" value="Chromosome 4"/>
</dbReference>
<dbReference type="GO" id="GO:0022627">
    <property type="term" value="C:cytosolic small ribosomal subunit"/>
    <property type="evidence" value="ECO:0000318"/>
    <property type="project" value="GO_Central"/>
</dbReference>
<dbReference type="GO" id="GO:0003735">
    <property type="term" value="F:structural constituent of ribosome"/>
    <property type="evidence" value="ECO:0000318"/>
    <property type="project" value="GO_Central"/>
</dbReference>
<dbReference type="GO" id="GO:0002181">
    <property type="term" value="P:cytoplasmic translation"/>
    <property type="evidence" value="ECO:0000318"/>
    <property type="project" value="GO_Central"/>
</dbReference>
<dbReference type="GO" id="GO:0000028">
    <property type="term" value="P:ribosomal small subunit assembly"/>
    <property type="evidence" value="ECO:0000318"/>
    <property type="project" value="GO_Central"/>
</dbReference>
<dbReference type="CDD" id="cd01425">
    <property type="entry name" value="RPS2"/>
    <property type="match status" value="1"/>
</dbReference>
<dbReference type="FunFam" id="3.40.50.10490:FF:000017">
    <property type="entry name" value="40S ribosomal protein SA"/>
    <property type="match status" value="1"/>
</dbReference>
<dbReference type="Gene3D" id="3.40.50.10490">
    <property type="entry name" value="Glucose-6-phosphate isomerase like protein, domain 1"/>
    <property type="match status" value="1"/>
</dbReference>
<dbReference type="HAMAP" id="MF_03015">
    <property type="entry name" value="Ribosomal_S2_euk"/>
    <property type="match status" value="1"/>
</dbReference>
<dbReference type="InterPro" id="IPR001865">
    <property type="entry name" value="Ribosomal_uS2"/>
</dbReference>
<dbReference type="InterPro" id="IPR032281">
    <property type="entry name" value="Ribosomal_uS2_C"/>
</dbReference>
<dbReference type="InterPro" id="IPR018130">
    <property type="entry name" value="Ribosomal_uS2_CS"/>
</dbReference>
<dbReference type="InterPro" id="IPR027498">
    <property type="entry name" value="Ribosomal_uS2_euk"/>
</dbReference>
<dbReference type="InterPro" id="IPR005707">
    <property type="entry name" value="Ribosomal_uS2_euk/arc"/>
</dbReference>
<dbReference type="InterPro" id="IPR023591">
    <property type="entry name" value="Ribosomal_uS2_flav_dom_sf"/>
</dbReference>
<dbReference type="NCBIfam" id="TIGR01012">
    <property type="entry name" value="uS2_euk_arch"/>
    <property type="match status" value="1"/>
</dbReference>
<dbReference type="PANTHER" id="PTHR11489">
    <property type="entry name" value="40S RIBOSOMAL PROTEIN SA"/>
    <property type="match status" value="1"/>
</dbReference>
<dbReference type="Pfam" id="PF16122">
    <property type="entry name" value="40S_SA_C"/>
    <property type="match status" value="1"/>
</dbReference>
<dbReference type="Pfam" id="PF00318">
    <property type="entry name" value="Ribosomal_S2"/>
    <property type="match status" value="2"/>
</dbReference>
<dbReference type="PRINTS" id="PR00395">
    <property type="entry name" value="RIBOSOMALS2"/>
</dbReference>
<dbReference type="SUPFAM" id="SSF52313">
    <property type="entry name" value="Ribosomal protein S2"/>
    <property type="match status" value="1"/>
</dbReference>
<dbReference type="PROSITE" id="PS00962">
    <property type="entry name" value="RIBOSOMAL_S2_1"/>
    <property type="match status" value="1"/>
</dbReference>
<dbReference type="PROSITE" id="PS00963">
    <property type="entry name" value="RIBOSOMAL_S2_2"/>
    <property type="match status" value="1"/>
</dbReference>
<proteinExistence type="inferred from homology"/>
<name>RSSA_MYCMD</name>
<gene>
    <name evidence="1" type="primary">RPS0</name>
    <name type="ORF">UMAG_05137</name>
</gene>
<keyword id="KW-0963">Cytoplasm</keyword>
<keyword id="KW-1185">Reference proteome</keyword>
<keyword id="KW-0687">Ribonucleoprotein</keyword>
<keyword id="KW-0689">Ribosomal protein</keyword>